<proteinExistence type="inferred from homology"/>
<gene>
    <name evidence="1" type="primary">psuG</name>
    <name type="ordered locus">STH1947</name>
</gene>
<evidence type="ECO:0000255" key="1">
    <source>
        <dbReference type="HAMAP-Rule" id="MF_01876"/>
    </source>
</evidence>
<sequence length="308" mass="32442">MKYLLSYTPEVREALDRNRPVVALESTIISHGMPYPENLRTAREVEEIVRSQGAVPATIAVIGGRCKVGLTDEELELLATSPEAVKVSLRDLPVVLARKSLGATTVATTATIAAAAGIEVFVTGGIGGVHRKSPGDPAQMWDVSADLTVLGRTDITVVCAGAKSVLDIGATLEVLETLGVTVLGYRTDRFPGFYTRDTGFGVDARVDTPEEAAAVIHARQQTMLPGGVLVVNPVPEEHAMDPDEVERHIADALKAMAAEGVTGKAVTPYLLARLKEVTSGRALQTNIALVKHNALVGAQIAVALKAGK</sequence>
<feature type="chain" id="PRO_0000390552" description="Pseudouridine-5'-phosphate glycosidase">
    <location>
        <begin position="1"/>
        <end position="308"/>
    </location>
</feature>
<feature type="active site" description="Proton donor" evidence="1">
    <location>
        <position position="25"/>
    </location>
</feature>
<feature type="active site" description="Nucleophile" evidence="1">
    <location>
        <position position="163"/>
    </location>
</feature>
<feature type="binding site" evidence="1">
    <location>
        <position position="86"/>
    </location>
    <ligand>
        <name>substrate</name>
    </ligand>
</feature>
<feature type="binding site" evidence="1">
    <location>
        <position position="106"/>
    </location>
    <ligand>
        <name>substrate</name>
    </ligand>
</feature>
<feature type="binding site" evidence="1">
    <location>
        <position position="142"/>
    </location>
    <ligand>
        <name>Mn(2+)</name>
        <dbReference type="ChEBI" id="CHEBI:29035"/>
    </ligand>
</feature>
<feature type="binding site" evidence="1">
    <location>
        <begin position="144"/>
        <end position="146"/>
    </location>
    <ligand>
        <name>substrate</name>
    </ligand>
</feature>
<name>PSUG_SYMTH</name>
<reference key="1">
    <citation type="journal article" date="2004" name="Nucleic Acids Res.">
        <title>Genome sequence of Symbiobacterium thermophilum, an uncultivable bacterium that depends on microbial commensalism.</title>
        <authorList>
            <person name="Ueda K."/>
            <person name="Yamashita A."/>
            <person name="Ishikawa J."/>
            <person name="Shimada M."/>
            <person name="Watsuji T."/>
            <person name="Morimura K."/>
            <person name="Ikeda H."/>
            <person name="Hattori M."/>
            <person name="Beppu T."/>
        </authorList>
    </citation>
    <scope>NUCLEOTIDE SEQUENCE [LARGE SCALE GENOMIC DNA]</scope>
    <source>
        <strain>DSM 24528 / JCM 14929 / IAM 14863 / T</strain>
    </source>
</reference>
<keyword id="KW-0326">Glycosidase</keyword>
<keyword id="KW-0378">Hydrolase</keyword>
<keyword id="KW-0456">Lyase</keyword>
<keyword id="KW-0464">Manganese</keyword>
<keyword id="KW-0479">Metal-binding</keyword>
<keyword id="KW-1185">Reference proteome</keyword>
<comment type="function">
    <text evidence="1">Catalyzes the reversible cleavage of pseudouridine 5'-phosphate (PsiMP) to ribose 5-phosphate and uracil. Functions biologically in the cleavage direction, as part of a pseudouridine degradation pathway.</text>
</comment>
<comment type="catalytic activity">
    <reaction evidence="1">
        <text>D-ribose 5-phosphate + uracil = psi-UMP + H2O</text>
        <dbReference type="Rhea" id="RHEA:18337"/>
        <dbReference type="ChEBI" id="CHEBI:15377"/>
        <dbReference type="ChEBI" id="CHEBI:17568"/>
        <dbReference type="ChEBI" id="CHEBI:58380"/>
        <dbReference type="ChEBI" id="CHEBI:78346"/>
        <dbReference type="EC" id="4.2.1.70"/>
    </reaction>
</comment>
<comment type="cofactor">
    <cofactor evidence="1">
        <name>Mn(2+)</name>
        <dbReference type="ChEBI" id="CHEBI:29035"/>
    </cofactor>
    <text evidence="1">Binds 1 Mn(2+) ion per subunit.</text>
</comment>
<comment type="subunit">
    <text evidence="1">Homotrimer.</text>
</comment>
<comment type="similarity">
    <text evidence="1">Belongs to the pseudouridine-5'-phosphate glycosidase family.</text>
</comment>
<dbReference type="EC" id="4.2.1.70" evidence="1"/>
<dbReference type="EMBL" id="AP006840">
    <property type="protein sequence ID" value="BAD40932.1"/>
    <property type="molecule type" value="Genomic_DNA"/>
</dbReference>
<dbReference type="RefSeq" id="WP_011196074.1">
    <property type="nucleotide sequence ID" value="NC_006177.1"/>
</dbReference>
<dbReference type="SMR" id="Q67N11"/>
<dbReference type="STRING" id="292459.STH1947"/>
<dbReference type="KEGG" id="sth:STH1947"/>
<dbReference type="eggNOG" id="COG2313">
    <property type="taxonomic scope" value="Bacteria"/>
</dbReference>
<dbReference type="HOGENOM" id="CLU_012201_0_1_9"/>
<dbReference type="OrthoDB" id="9805870at2"/>
<dbReference type="Proteomes" id="UP000000417">
    <property type="component" value="Chromosome"/>
</dbReference>
<dbReference type="GO" id="GO:0005737">
    <property type="term" value="C:cytoplasm"/>
    <property type="evidence" value="ECO:0007669"/>
    <property type="project" value="TreeGrafter"/>
</dbReference>
<dbReference type="GO" id="GO:0016798">
    <property type="term" value="F:hydrolase activity, acting on glycosyl bonds"/>
    <property type="evidence" value="ECO:0007669"/>
    <property type="project" value="UniProtKB-KW"/>
</dbReference>
<dbReference type="GO" id="GO:0046872">
    <property type="term" value="F:metal ion binding"/>
    <property type="evidence" value="ECO:0007669"/>
    <property type="project" value="UniProtKB-KW"/>
</dbReference>
<dbReference type="GO" id="GO:0004730">
    <property type="term" value="F:pseudouridylate synthase activity"/>
    <property type="evidence" value="ECO:0007669"/>
    <property type="project" value="UniProtKB-UniRule"/>
</dbReference>
<dbReference type="GO" id="GO:0046113">
    <property type="term" value="P:nucleobase catabolic process"/>
    <property type="evidence" value="ECO:0007669"/>
    <property type="project" value="UniProtKB-UniRule"/>
</dbReference>
<dbReference type="Gene3D" id="3.40.1790.10">
    <property type="entry name" value="Indigoidine synthase domain"/>
    <property type="match status" value="1"/>
</dbReference>
<dbReference type="HAMAP" id="MF_01876">
    <property type="entry name" value="PsiMP_glycosidase"/>
    <property type="match status" value="1"/>
</dbReference>
<dbReference type="InterPro" id="IPR022830">
    <property type="entry name" value="Indigdn_synthA-like"/>
</dbReference>
<dbReference type="InterPro" id="IPR007342">
    <property type="entry name" value="PsuG"/>
</dbReference>
<dbReference type="PANTHER" id="PTHR42909:SF1">
    <property type="entry name" value="CARBOHYDRATE KINASE PFKB DOMAIN-CONTAINING PROTEIN"/>
    <property type="match status" value="1"/>
</dbReference>
<dbReference type="PANTHER" id="PTHR42909">
    <property type="entry name" value="ZGC:136858"/>
    <property type="match status" value="1"/>
</dbReference>
<dbReference type="Pfam" id="PF04227">
    <property type="entry name" value="Indigoidine_A"/>
    <property type="match status" value="1"/>
</dbReference>
<dbReference type="SUPFAM" id="SSF110581">
    <property type="entry name" value="Indigoidine synthase A-like"/>
    <property type="match status" value="1"/>
</dbReference>
<organism>
    <name type="scientific">Symbiobacterium thermophilum (strain DSM 24528 / JCM 14929 / IAM 14863 / T)</name>
    <dbReference type="NCBI Taxonomy" id="292459"/>
    <lineage>
        <taxon>Bacteria</taxon>
        <taxon>Bacillati</taxon>
        <taxon>Bacillota</taxon>
        <taxon>Clostridia</taxon>
        <taxon>Eubacteriales</taxon>
        <taxon>Symbiobacteriaceae</taxon>
        <taxon>Symbiobacterium</taxon>
    </lineage>
</organism>
<protein>
    <recommendedName>
        <fullName evidence="1">Pseudouridine-5'-phosphate glycosidase</fullName>
        <shortName evidence="1">PsiMP glycosidase</shortName>
        <ecNumber evidence="1">4.2.1.70</ecNumber>
    </recommendedName>
</protein>
<accession>Q67N11</accession>